<protein>
    <recommendedName>
        <fullName>Uncharacterized protein MT2003.1</fullName>
    </recommendedName>
</protein>
<feature type="chain" id="PRO_0000427439" description="Uncharacterized protein MT2003.1">
    <location>
        <begin position="1"/>
        <end position="173"/>
    </location>
</feature>
<keyword id="KW-1185">Reference proteome</keyword>
<gene>
    <name type="ordered locus">MT2003.1</name>
</gene>
<reference key="1">
    <citation type="journal article" date="2002" name="J. Bacteriol.">
        <title>Whole-genome comparison of Mycobacterium tuberculosis clinical and laboratory strains.</title>
        <authorList>
            <person name="Fleischmann R.D."/>
            <person name="Alland D."/>
            <person name="Eisen J.A."/>
            <person name="Carpenter L."/>
            <person name="White O."/>
            <person name="Peterson J.D."/>
            <person name="DeBoy R.T."/>
            <person name="Dodson R.J."/>
            <person name="Gwinn M.L."/>
            <person name="Haft D.H."/>
            <person name="Hickey E.K."/>
            <person name="Kolonay J.F."/>
            <person name="Nelson W.C."/>
            <person name="Umayam L.A."/>
            <person name="Ermolaeva M.D."/>
            <person name="Salzberg S.L."/>
            <person name="Delcher A."/>
            <person name="Utterback T.R."/>
            <person name="Weidman J.F."/>
            <person name="Khouri H.M."/>
            <person name="Gill J."/>
            <person name="Mikula A."/>
            <person name="Bishai W."/>
            <person name="Jacobs W.R. Jr."/>
            <person name="Venter J.C."/>
            <person name="Fraser C.M."/>
        </authorList>
    </citation>
    <scope>NUCLEOTIDE SEQUENCE [LARGE SCALE GENOMIC DNA]</scope>
    <source>
        <strain>CDC 1551 / Oshkosh</strain>
    </source>
</reference>
<name>Y1954_MYCTO</name>
<dbReference type="EMBL" id="AE000516">
    <property type="status" value="NOT_ANNOTATED_CDS"/>
    <property type="molecule type" value="Genomic_DNA"/>
</dbReference>
<dbReference type="PIR" id="F70638">
    <property type="entry name" value="F70638"/>
</dbReference>
<dbReference type="RefSeq" id="WP_003904745.1">
    <property type="nucleotide sequence ID" value="NZ_KK341227.1"/>
</dbReference>
<dbReference type="Proteomes" id="UP000001020">
    <property type="component" value="Chromosome"/>
</dbReference>
<sequence length="173" mass="18481">MAAGSGGGTVGLVLPRVASLSGLDGAPTVPEGSDKALMHLGDPPRRCDTHPDGTSSAAAALVLRRIDVHPLLTGLGRGRQTVSLRNGHLVATANRAILSRRRSRLTRGRSFTSHLITSCPRLDDHQHRHPTRCRAEHAGCTVATCIPNAHDPAPGHQTPRWGPFRLKPAYTRI</sequence>
<accession>P9WLQ2</accession>
<accession>L0T9R2</accession>
<accession>P95260</accession>
<proteinExistence type="predicted"/>
<organism>
    <name type="scientific">Mycobacterium tuberculosis (strain CDC 1551 / Oshkosh)</name>
    <dbReference type="NCBI Taxonomy" id="83331"/>
    <lineage>
        <taxon>Bacteria</taxon>
        <taxon>Bacillati</taxon>
        <taxon>Actinomycetota</taxon>
        <taxon>Actinomycetes</taxon>
        <taxon>Mycobacteriales</taxon>
        <taxon>Mycobacteriaceae</taxon>
        <taxon>Mycobacterium</taxon>
        <taxon>Mycobacterium tuberculosis complex</taxon>
    </lineage>
</organism>